<organism>
    <name type="scientific">Arabidopsis thaliana</name>
    <name type="common">Mouse-ear cress</name>
    <dbReference type="NCBI Taxonomy" id="3702"/>
    <lineage>
        <taxon>Eukaryota</taxon>
        <taxon>Viridiplantae</taxon>
        <taxon>Streptophyta</taxon>
        <taxon>Embryophyta</taxon>
        <taxon>Tracheophyta</taxon>
        <taxon>Spermatophyta</taxon>
        <taxon>Magnoliopsida</taxon>
        <taxon>eudicotyledons</taxon>
        <taxon>Gunneridae</taxon>
        <taxon>Pentapetalae</taxon>
        <taxon>rosids</taxon>
        <taxon>malvids</taxon>
        <taxon>Brassicales</taxon>
        <taxon>Brassicaceae</taxon>
        <taxon>Camelineae</taxon>
        <taxon>Arabidopsis</taxon>
    </lineage>
</organism>
<evidence type="ECO:0000255" key="1"/>
<evidence type="ECO:0000255" key="2">
    <source>
        <dbReference type="PROSITE-ProRule" id="PRU00103"/>
    </source>
</evidence>
<evidence type="ECO:0000255" key="3">
    <source>
        <dbReference type="PROSITE-ProRule" id="PRU00159"/>
    </source>
</evidence>
<evidence type="ECO:0000256" key="4">
    <source>
        <dbReference type="SAM" id="MobiDB-lite"/>
    </source>
</evidence>
<evidence type="ECO:0000269" key="5">
    <source>
    </source>
</evidence>
<evidence type="ECO:0000303" key="6">
    <source>
    </source>
</evidence>
<evidence type="ECO:0000305" key="7"/>
<evidence type="ECO:0000312" key="8">
    <source>
        <dbReference type="Araport" id="AT1G71410"/>
    </source>
</evidence>
<evidence type="ECO:0000312" key="9">
    <source>
        <dbReference type="EMBL" id="AAG51833.1"/>
    </source>
</evidence>
<protein>
    <recommendedName>
        <fullName evidence="6">SCY1-like protein 2 B</fullName>
    </recommendedName>
    <alternativeName>
        <fullName evidence="7">Inactive protein kinase SCYL2B</fullName>
    </alternativeName>
</protein>
<keyword id="KW-0333">Golgi apparatus</keyword>
<keyword id="KW-0472">Membrane</keyword>
<keyword id="KW-1185">Reference proteome</keyword>
<keyword id="KW-0677">Repeat</keyword>
<sequence>MSINMKTFTQALARTAAVIEKTVHTTVQEVTGPKALQDYELLDQIGSAGPGLAWKLYAAKARDSTRPQQYPTVCVWMLDKRALSEARVRANLSKAAEDAFLDLIRADAGKLVRLRHPGVVHVVQALDENKNAMALVTEPLFASVANALGNVENVGNVPKDLKSMEMSLLEVKHGLLQISETLNFLHNNANLIHRAISPENVLITSAGSWKLAGFGFAISAAQAGNLDNMQSFHYSEYDVEDSILPVQPSLNYTAPELMRSKSPSAGASSDIFSFGCLAYHLVARKPLFDCNNNVKMYMNTLNYITNESFSSIPSELVSDLQRMLSTNESFRPTALDFTGSNFFRSDARLRALRFLDHLLERDNMQKSEFLKALSDMWKDFDSRVLRYKVLPPLCAELRNLVLQPIILPMVLTIAQSQDRTDFELITLPALVPVLSTASGDTLLLLVKHADLITNKTDSEHLVSHVLPLLLRAYNDNDVRIQEEVLKRSTSVAKQLDGQVVRQAILPRVHGLALKTTVAAVRVNALLCLAELVQTLDKPAAIEILETIQRCTAVDRSAPTLMCTLAVANAILKQYGVEFTAEHVLTLMMPLLTAQQLNVQQFAKYMLFVKDILRKIEEKRGVTVNDSGVPEVKPHSAANGLQFQSSTQIPEKVASAAKSSPAWDEDWGSPSKDSAVGNPASSRHNTNDQFNKSTDQSQPSIMSTLPNKTTAPTTCPAVDIEWPPRQSSSLTAPATDNQTQLNTGTSFASGFDELDPFANWPPRPNNGASVASTGLKNGAASNFSNNLPGGTHFQTANNDNWAFSSASLSSLKPPQQGNQGISANNQDPLNSFGVPKQSQGMPSFTSGSYNNQKPADISSIFGSSKTEPSAMKLAPPPSIAMGRGRGRGRGGTGTSTSKPSGSQPSLLDLL</sequence>
<comment type="function">
    <text evidence="5">Probably inactive kinase (PubMed:28751315). Component of the AP2-containing clathrin coat that regulates clathrin-dependent trafficking at plasma membrane, TGN and endosomal system (PubMed:28751315). Together with SCYL2B, required for cell growth, plant growth and development (PubMed:28751315). Essential for polarized root hair development probably by mediating the root hair tip localization of cellulose synthase-like D3 (CSLD3) (PubMed:28751315).</text>
</comment>
<comment type="subunit">
    <text evidence="5">Interacts with VTI11, VTI12 and CHC1.</text>
</comment>
<comment type="subcellular location">
    <subcellularLocation>
        <location evidence="5">Golgi apparatus membrane</location>
    </subcellularLocation>
    <subcellularLocation>
        <location evidence="5">Golgi apparatus</location>
        <location evidence="5">trans-Golgi network membrane</location>
    </subcellularLocation>
    <subcellularLocation>
        <location evidence="5">Prevacuolar compartment membrane</location>
    </subcellularLocation>
    <text evidence="5">Colocalizes with the clathrin heavy chain 1 (CHC1).</text>
</comment>
<comment type="tissue specificity">
    <text evidence="5">Expressed in roots, seedlings, leaves, stems, flowers, and, at low levels, in siliques.</text>
</comment>
<comment type="developmental stage">
    <text evidence="5">Expressed in shoot and root vascular tissues (PubMed:28751315). In root cap regions, accumulates in columella cells and lateral root caps (PubMed:28751315). Also observed specialized cell types such as trichomes, guard cells and root hairs (PubMed:28751315).</text>
</comment>
<comment type="domain">
    <text evidence="3">The protein kinase domain is predicted to be catalytically inactive.</text>
</comment>
<comment type="disruption phenotype">
    <text evidence="5">Abnormal root hair development (e.g. shorter with abnormal shapes) (PubMed:28751315). The double mutant scyl2a scyl2b has short root hairs and small shoots (PubMed:28751315).</text>
</comment>
<comment type="similarity">
    <text evidence="7">Belongs to the protein kinase superfamily.</text>
</comment>
<comment type="caution">
    <text evidence="7">Although it belongs to the kinase superfamily, lacks the residues involved in ATP binding, suggesting that it has no protein kinase activity.</text>
</comment>
<proteinExistence type="evidence at protein level"/>
<feature type="chain" id="PRO_0000454398" description="SCY1-like protein 2 B">
    <location>
        <begin position="1"/>
        <end position="909"/>
    </location>
</feature>
<feature type="domain" description="Protein kinase" evidence="3">
    <location>
        <begin position="39"/>
        <end position="343"/>
    </location>
</feature>
<feature type="repeat" description="HEAT 1" evidence="1">
    <location>
        <begin position="311"/>
        <end position="348"/>
    </location>
</feature>
<feature type="repeat" description="HEAT 2" evidence="1">
    <location>
        <begin position="350"/>
        <end position="382"/>
    </location>
</feature>
<feature type="repeat" description="HEAT 3" evidence="1">
    <location>
        <begin position="383"/>
        <end position="401"/>
    </location>
</feature>
<feature type="repeat" description="HEAT 4" evidence="1">
    <location>
        <begin position="402"/>
        <end position="439"/>
    </location>
</feature>
<feature type="repeat" description="HEAT 5" evidence="2">
    <location>
        <begin position="465"/>
        <end position="502"/>
    </location>
</feature>
<feature type="repeat" description="HEAT 6" evidence="1">
    <location>
        <begin position="499"/>
        <end position="537"/>
    </location>
</feature>
<feature type="repeat" description="HEAT 7" evidence="1">
    <location>
        <begin position="578"/>
        <end position="617"/>
    </location>
</feature>
<feature type="region of interest" description="Disordered" evidence="4">
    <location>
        <begin position="624"/>
        <end position="772"/>
    </location>
</feature>
<feature type="region of interest" description="Disordered" evidence="4">
    <location>
        <begin position="804"/>
        <end position="909"/>
    </location>
</feature>
<feature type="compositionally biased region" description="Polar residues" evidence="4">
    <location>
        <begin position="638"/>
        <end position="648"/>
    </location>
</feature>
<feature type="compositionally biased region" description="Polar residues" evidence="4">
    <location>
        <begin position="678"/>
        <end position="712"/>
    </location>
</feature>
<feature type="compositionally biased region" description="Polar residues" evidence="4">
    <location>
        <begin position="724"/>
        <end position="747"/>
    </location>
</feature>
<feature type="compositionally biased region" description="Polar residues" evidence="4">
    <location>
        <begin position="804"/>
        <end position="828"/>
    </location>
</feature>
<feature type="compositionally biased region" description="Polar residues" evidence="4">
    <location>
        <begin position="835"/>
        <end position="852"/>
    </location>
</feature>
<feature type="sequence conflict" description="In Ref. 3; BAF01849." evidence="7" ref="3">
    <original>T</original>
    <variation>I</variation>
    <location>
        <position position="204"/>
    </location>
</feature>
<gene>
    <name evidence="6" type="primary">SCYL2B</name>
    <name evidence="8" type="ordered locus">At1g71410</name>
    <name evidence="9" type="ORF">F26A9.21</name>
</gene>
<reference key="1">
    <citation type="journal article" date="2000" name="Nature">
        <title>Sequence and analysis of chromosome 1 of the plant Arabidopsis thaliana.</title>
        <authorList>
            <person name="Theologis A."/>
            <person name="Ecker J.R."/>
            <person name="Palm C.J."/>
            <person name="Federspiel N.A."/>
            <person name="Kaul S."/>
            <person name="White O."/>
            <person name="Alonso J."/>
            <person name="Altafi H."/>
            <person name="Araujo R."/>
            <person name="Bowman C.L."/>
            <person name="Brooks S.Y."/>
            <person name="Buehler E."/>
            <person name="Chan A."/>
            <person name="Chao Q."/>
            <person name="Chen H."/>
            <person name="Cheuk R.F."/>
            <person name="Chin C.W."/>
            <person name="Chung M.K."/>
            <person name="Conn L."/>
            <person name="Conway A.B."/>
            <person name="Conway A.R."/>
            <person name="Creasy T.H."/>
            <person name="Dewar K."/>
            <person name="Dunn P."/>
            <person name="Etgu P."/>
            <person name="Feldblyum T.V."/>
            <person name="Feng J.-D."/>
            <person name="Fong B."/>
            <person name="Fujii C.Y."/>
            <person name="Gill J.E."/>
            <person name="Goldsmith A.D."/>
            <person name="Haas B."/>
            <person name="Hansen N.F."/>
            <person name="Hughes B."/>
            <person name="Huizar L."/>
            <person name="Hunter J.L."/>
            <person name="Jenkins J."/>
            <person name="Johnson-Hopson C."/>
            <person name="Khan S."/>
            <person name="Khaykin E."/>
            <person name="Kim C.J."/>
            <person name="Koo H.L."/>
            <person name="Kremenetskaia I."/>
            <person name="Kurtz D.B."/>
            <person name="Kwan A."/>
            <person name="Lam B."/>
            <person name="Langin-Hooper S."/>
            <person name="Lee A."/>
            <person name="Lee J.M."/>
            <person name="Lenz C.A."/>
            <person name="Li J.H."/>
            <person name="Li Y.-P."/>
            <person name="Lin X."/>
            <person name="Liu S.X."/>
            <person name="Liu Z.A."/>
            <person name="Luros J.S."/>
            <person name="Maiti R."/>
            <person name="Marziali A."/>
            <person name="Militscher J."/>
            <person name="Miranda M."/>
            <person name="Nguyen M."/>
            <person name="Nierman W.C."/>
            <person name="Osborne B.I."/>
            <person name="Pai G."/>
            <person name="Peterson J."/>
            <person name="Pham P.K."/>
            <person name="Rizzo M."/>
            <person name="Rooney T."/>
            <person name="Rowley D."/>
            <person name="Sakano H."/>
            <person name="Salzberg S.L."/>
            <person name="Schwartz J.R."/>
            <person name="Shinn P."/>
            <person name="Southwick A.M."/>
            <person name="Sun H."/>
            <person name="Tallon L.J."/>
            <person name="Tambunga G."/>
            <person name="Toriumi M.J."/>
            <person name="Town C.D."/>
            <person name="Utterback T."/>
            <person name="Van Aken S."/>
            <person name="Vaysberg M."/>
            <person name="Vysotskaia V.S."/>
            <person name="Walker M."/>
            <person name="Wu D."/>
            <person name="Yu G."/>
            <person name="Fraser C.M."/>
            <person name="Venter J.C."/>
            <person name="Davis R.W."/>
        </authorList>
    </citation>
    <scope>NUCLEOTIDE SEQUENCE [LARGE SCALE GENOMIC DNA]</scope>
    <source>
        <strain>cv. Columbia</strain>
    </source>
</reference>
<reference key="2">
    <citation type="journal article" date="2017" name="Plant J.">
        <title>Araport11: a complete reannotation of the Arabidopsis thaliana reference genome.</title>
        <authorList>
            <person name="Cheng C.Y."/>
            <person name="Krishnakumar V."/>
            <person name="Chan A.P."/>
            <person name="Thibaud-Nissen F."/>
            <person name="Schobel S."/>
            <person name="Town C.D."/>
        </authorList>
    </citation>
    <scope>GENOME REANNOTATION</scope>
    <source>
        <strain>cv. Columbia</strain>
    </source>
</reference>
<reference key="3">
    <citation type="submission" date="2005-03" db="EMBL/GenBank/DDBJ databases">
        <title>Large-scale analysis of RIKEN Arabidopsis full-length (RAFL) cDNAs.</title>
        <authorList>
            <person name="Totoki Y."/>
            <person name="Seki M."/>
            <person name="Ishida J."/>
            <person name="Nakajima M."/>
            <person name="Enju A."/>
            <person name="Kamiya A."/>
            <person name="Narusaka M."/>
            <person name="Shin-i T."/>
            <person name="Nakagawa M."/>
            <person name="Sakamoto N."/>
            <person name="Oishi K."/>
            <person name="Kohara Y."/>
            <person name="Kobayashi M."/>
            <person name="Toyoda A."/>
            <person name="Sakaki Y."/>
            <person name="Sakurai T."/>
            <person name="Iida K."/>
            <person name="Akiyama K."/>
            <person name="Satou M."/>
            <person name="Toyoda T."/>
            <person name="Konagaya A."/>
            <person name="Carninci P."/>
            <person name="Kawai J."/>
            <person name="Hayashizaki Y."/>
            <person name="Shinozaki K."/>
        </authorList>
    </citation>
    <scope>NUCLEOTIDE SEQUENCE [LARGE SCALE MRNA]</scope>
    <source>
        <strain>cv. Columbia</strain>
    </source>
</reference>
<reference key="4">
    <citation type="journal article" date="2017" name="Plant Physiol.">
        <title>SCYL2 genes are involved in clathrin-mediated vesicle trafficking and essential for plant growth.</title>
        <authorList>
            <person name="Jung J.-Y."/>
            <person name="Lee D.W."/>
            <person name="Ryu S.B."/>
            <person name="Hwang I."/>
            <person name="Schachtman D.P."/>
        </authorList>
    </citation>
    <scope>FUNCTION</scope>
    <scope>DISRUPTION PHENOTYPE</scope>
    <scope>INTERACTION WITH VTI11; VTI12 AND CHC1</scope>
    <scope>TISSUE SPECIFICITY</scope>
    <scope>SUBCELLULAR LOCATION</scope>
    <scope>DEVELOPMENTAL STAGE</scope>
    <source>
        <strain>cv. Columbia</strain>
    </source>
</reference>
<accession>Q9C9H8</accession>
<accession>Q0WM08</accession>
<name>SCY2B_ARATH</name>
<dbReference type="EMBL" id="AC016163">
    <property type="protein sequence ID" value="AAG51833.1"/>
    <property type="molecule type" value="Genomic_DNA"/>
</dbReference>
<dbReference type="EMBL" id="CP002684">
    <property type="protein sequence ID" value="AEE35198.1"/>
    <property type="molecule type" value="Genomic_DNA"/>
</dbReference>
<dbReference type="EMBL" id="CP002684">
    <property type="protein sequence ID" value="ANM60464.1"/>
    <property type="molecule type" value="Genomic_DNA"/>
</dbReference>
<dbReference type="EMBL" id="AK221244">
    <property type="protein sequence ID" value="BAD93866.1"/>
    <property type="molecule type" value="mRNA"/>
</dbReference>
<dbReference type="EMBL" id="AK230027">
    <property type="protein sequence ID" value="BAF01849.1"/>
    <property type="molecule type" value="mRNA"/>
</dbReference>
<dbReference type="RefSeq" id="NP_001322749.1">
    <property type="nucleotide sequence ID" value="NM_001334498.1"/>
</dbReference>
<dbReference type="RefSeq" id="NP_177297.1">
    <property type="nucleotide sequence ID" value="NM_105810.4"/>
</dbReference>
<dbReference type="SMR" id="Q9C9H8"/>
<dbReference type="FunCoup" id="Q9C9H8">
    <property type="interactions" value="4047"/>
</dbReference>
<dbReference type="IntAct" id="Q9C9H8">
    <property type="interactions" value="1"/>
</dbReference>
<dbReference type="STRING" id="3702.Q9C9H8"/>
<dbReference type="GlyGen" id="Q9C9H8">
    <property type="glycosylation" value="3 sites, 1 O-linked glycan (3 sites)"/>
</dbReference>
<dbReference type="iPTMnet" id="Q9C9H8"/>
<dbReference type="PaxDb" id="3702-AT1G71410.1"/>
<dbReference type="ProteomicsDB" id="175225"/>
<dbReference type="EnsemblPlants" id="AT1G71410.1">
    <property type="protein sequence ID" value="AT1G71410.1"/>
    <property type="gene ID" value="AT1G71410"/>
</dbReference>
<dbReference type="EnsemblPlants" id="AT1G71410.2">
    <property type="protein sequence ID" value="AT1G71410.2"/>
    <property type="gene ID" value="AT1G71410"/>
</dbReference>
<dbReference type="GeneID" id="843482"/>
<dbReference type="Gramene" id="AT1G71410.1">
    <property type="protein sequence ID" value="AT1G71410.1"/>
    <property type="gene ID" value="AT1G71410"/>
</dbReference>
<dbReference type="Gramene" id="AT1G71410.2">
    <property type="protein sequence ID" value="AT1G71410.2"/>
    <property type="gene ID" value="AT1G71410"/>
</dbReference>
<dbReference type="KEGG" id="ath:AT1G71410"/>
<dbReference type="Araport" id="AT1G71410"/>
<dbReference type="TAIR" id="AT1G71410">
    <property type="gene designation" value="SCYL2B"/>
</dbReference>
<dbReference type="eggNOG" id="KOG2137">
    <property type="taxonomic scope" value="Eukaryota"/>
</dbReference>
<dbReference type="HOGENOM" id="CLU_008724_4_0_1"/>
<dbReference type="InParanoid" id="Q9C9H8"/>
<dbReference type="OMA" id="KQSQGMP"/>
<dbReference type="PhylomeDB" id="Q9C9H8"/>
<dbReference type="PRO" id="PR:Q9C9H8"/>
<dbReference type="Proteomes" id="UP000006548">
    <property type="component" value="Chromosome 1"/>
</dbReference>
<dbReference type="ExpressionAtlas" id="Q9C9H8">
    <property type="expression patterns" value="baseline and differential"/>
</dbReference>
<dbReference type="GO" id="GO:0000139">
    <property type="term" value="C:Golgi membrane"/>
    <property type="evidence" value="ECO:0000314"/>
    <property type="project" value="UniProtKB"/>
</dbReference>
<dbReference type="GO" id="GO:0031902">
    <property type="term" value="C:late endosome membrane"/>
    <property type="evidence" value="ECO:0000314"/>
    <property type="project" value="UniProtKB"/>
</dbReference>
<dbReference type="GO" id="GO:0035619">
    <property type="term" value="C:root hair tip"/>
    <property type="evidence" value="ECO:0000314"/>
    <property type="project" value="TAIR"/>
</dbReference>
<dbReference type="GO" id="GO:0032588">
    <property type="term" value="C:trans-Golgi network membrane"/>
    <property type="evidence" value="ECO:0000314"/>
    <property type="project" value="UniProtKB"/>
</dbReference>
<dbReference type="GO" id="GO:0005524">
    <property type="term" value="F:ATP binding"/>
    <property type="evidence" value="ECO:0007669"/>
    <property type="project" value="InterPro"/>
</dbReference>
<dbReference type="GO" id="GO:0032050">
    <property type="term" value="F:clathrin heavy chain binding"/>
    <property type="evidence" value="ECO:0000314"/>
    <property type="project" value="UniProtKB"/>
</dbReference>
<dbReference type="GO" id="GO:0004672">
    <property type="term" value="F:protein kinase activity"/>
    <property type="evidence" value="ECO:0007669"/>
    <property type="project" value="InterPro"/>
</dbReference>
<dbReference type="GO" id="GO:0080147">
    <property type="term" value="P:root hair cell development"/>
    <property type="evidence" value="ECO:0000315"/>
    <property type="project" value="UniProtKB"/>
</dbReference>
<dbReference type="CDD" id="cd14011">
    <property type="entry name" value="PK_SCY1_like"/>
    <property type="match status" value="1"/>
</dbReference>
<dbReference type="FunFam" id="1.10.510.10:FF:000859">
    <property type="entry name" value="ARM repeat superfamily protein"/>
    <property type="match status" value="1"/>
</dbReference>
<dbReference type="FunFam" id="1.25.10.10:FF:000414">
    <property type="entry name" value="Kinase family with ARM repeat domain-containing protein"/>
    <property type="match status" value="1"/>
</dbReference>
<dbReference type="Gene3D" id="1.25.10.10">
    <property type="entry name" value="Leucine-rich Repeat Variant"/>
    <property type="match status" value="1"/>
</dbReference>
<dbReference type="Gene3D" id="3.30.200.20">
    <property type="entry name" value="Phosphorylase Kinase, domain 1"/>
    <property type="match status" value="1"/>
</dbReference>
<dbReference type="Gene3D" id="1.10.510.10">
    <property type="entry name" value="Transferase(Phosphotransferase) domain 1"/>
    <property type="match status" value="1"/>
</dbReference>
<dbReference type="InterPro" id="IPR011989">
    <property type="entry name" value="ARM-like"/>
</dbReference>
<dbReference type="InterPro" id="IPR016024">
    <property type="entry name" value="ARM-type_fold"/>
</dbReference>
<dbReference type="InterPro" id="IPR051177">
    <property type="entry name" value="CIK-Related_Protein"/>
</dbReference>
<dbReference type="InterPro" id="IPR011009">
    <property type="entry name" value="Kinase-like_dom_sf"/>
</dbReference>
<dbReference type="InterPro" id="IPR000719">
    <property type="entry name" value="Prot_kinase_dom"/>
</dbReference>
<dbReference type="PANTHER" id="PTHR12984:SF20">
    <property type="entry name" value="SCY1-LIKE PROTEIN 2 B"/>
    <property type="match status" value="1"/>
</dbReference>
<dbReference type="PANTHER" id="PTHR12984">
    <property type="entry name" value="SCY1-RELATED S/T PROTEIN KINASE-LIKE"/>
    <property type="match status" value="1"/>
</dbReference>
<dbReference type="Pfam" id="PF00069">
    <property type="entry name" value="Pkinase"/>
    <property type="match status" value="1"/>
</dbReference>
<dbReference type="SUPFAM" id="SSF48371">
    <property type="entry name" value="ARM repeat"/>
    <property type="match status" value="1"/>
</dbReference>
<dbReference type="SUPFAM" id="SSF56112">
    <property type="entry name" value="Protein kinase-like (PK-like)"/>
    <property type="match status" value="1"/>
</dbReference>
<dbReference type="PROSITE" id="PS50011">
    <property type="entry name" value="PROTEIN_KINASE_DOM"/>
    <property type="match status" value="1"/>
</dbReference>